<dbReference type="EMBL" id="CP001029">
    <property type="protein sequence ID" value="ACB79633.1"/>
    <property type="molecule type" value="Genomic_DNA"/>
</dbReference>
<dbReference type="RefSeq" id="WP_012453381.1">
    <property type="nucleotide sequence ID" value="NC_010725.1"/>
</dbReference>
<dbReference type="SMR" id="B1ZEE8"/>
<dbReference type="STRING" id="441620.Mpop_1466"/>
<dbReference type="KEGG" id="mpo:Mpop_1466"/>
<dbReference type="eggNOG" id="COG0224">
    <property type="taxonomic scope" value="Bacteria"/>
</dbReference>
<dbReference type="HOGENOM" id="CLU_050669_0_1_5"/>
<dbReference type="OrthoDB" id="9812769at2"/>
<dbReference type="Proteomes" id="UP000007136">
    <property type="component" value="Chromosome"/>
</dbReference>
<dbReference type="GO" id="GO:0005886">
    <property type="term" value="C:plasma membrane"/>
    <property type="evidence" value="ECO:0007669"/>
    <property type="project" value="UniProtKB-SubCell"/>
</dbReference>
<dbReference type="GO" id="GO:0045259">
    <property type="term" value="C:proton-transporting ATP synthase complex"/>
    <property type="evidence" value="ECO:0007669"/>
    <property type="project" value="UniProtKB-KW"/>
</dbReference>
<dbReference type="GO" id="GO:0005524">
    <property type="term" value="F:ATP binding"/>
    <property type="evidence" value="ECO:0007669"/>
    <property type="project" value="UniProtKB-UniRule"/>
</dbReference>
<dbReference type="GO" id="GO:0046933">
    <property type="term" value="F:proton-transporting ATP synthase activity, rotational mechanism"/>
    <property type="evidence" value="ECO:0007669"/>
    <property type="project" value="UniProtKB-UniRule"/>
</dbReference>
<dbReference type="GO" id="GO:0042777">
    <property type="term" value="P:proton motive force-driven plasma membrane ATP synthesis"/>
    <property type="evidence" value="ECO:0007669"/>
    <property type="project" value="UniProtKB-UniRule"/>
</dbReference>
<dbReference type="CDD" id="cd12151">
    <property type="entry name" value="F1-ATPase_gamma"/>
    <property type="match status" value="1"/>
</dbReference>
<dbReference type="FunFam" id="1.10.287.80:FF:000001">
    <property type="entry name" value="ATP synthase gamma chain"/>
    <property type="match status" value="1"/>
</dbReference>
<dbReference type="FunFam" id="1.10.287.80:FF:000003">
    <property type="entry name" value="ATP synthase gamma chain, chloroplastic"/>
    <property type="match status" value="1"/>
</dbReference>
<dbReference type="Gene3D" id="3.40.1380.10">
    <property type="match status" value="1"/>
</dbReference>
<dbReference type="Gene3D" id="1.10.287.80">
    <property type="entry name" value="ATP synthase, gamma subunit, helix hairpin domain"/>
    <property type="match status" value="1"/>
</dbReference>
<dbReference type="HAMAP" id="MF_00815">
    <property type="entry name" value="ATP_synth_gamma_bact"/>
    <property type="match status" value="1"/>
</dbReference>
<dbReference type="InterPro" id="IPR035968">
    <property type="entry name" value="ATP_synth_F1_ATPase_gsu"/>
</dbReference>
<dbReference type="InterPro" id="IPR000131">
    <property type="entry name" value="ATP_synth_F1_gsu"/>
</dbReference>
<dbReference type="InterPro" id="IPR023632">
    <property type="entry name" value="ATP_synth_F1_gsu_CS"/>
</dbReference>
<dbReference type="NCBIfam" id="TIGR01146">
    <property type="entry name" value="ATPsyn_F1gamma"/>
    <property type="match status" value="1"/>
</dbReference>
<dbReference type="NCBIfam" id="NF004146">
    <property type="entry name" value="PRK05621.1-4"/>
    <property type="match status" value="1"/>
</dbReference>
<dbReference type="PANTHER" id="PTHR11693">
    <property type="entry name" value="ATP SYNTHASE GAMMA CHAIN"/>
    <property type="match status" value="1"/>
</dbReference>
<dbReference type="PANTHER" id="PTHR11693:SF22">
    <property type="entry name" value="ATP SYNTHASE SUBUNIT GAMMA, MITOCHONDRIAL"/>
    <property type="match status" value="1"/>
</dbReference>
<dbReference type="Pfam" id="PF00231">
    <property type="entry name" value="ATP-synt"/>
    <property type="match status" value="1"/>
</dbReference>
<dbReference type="PIRSF" id="PIRSF039089">
    <property type="entry name" value="ATP_synthase_gamma"/>
    <property type="match status" value="1"/>
</dbReference>
<dbReference type="PRINTS" id="PR00126">
    <property type="entry name" value="ATPASEGAMMA"/>
</dbReference>
<dbReference type="SUPFAM" id="SSF52943">
    <property type="entry name" value="ATP synthase (F1-ATPase), gamma subunit"/>
    <property type="match status" value="1"/>
</dbReference>
<dbReference type="PROSITE" id="PS00153">
    <property type="entry name" value="ATPASE_GAMMA"/>
    <property type="match status" value="1"/>
</dbReference>
<keyword id="KW-0066">ATP synthesis</keyword>
<keyword id="KW-0997">Cell inner membrane</keyword>
<keyword id="KW-1003">Cell membrane</keyword>
<keyword id="KW-0139">CF(1)</keyword>
<keyword id="KW-0375">Hydrogen ion transport</keyword>
<keyword id="KW-0406">Ion transport</keyword>
<keyword id="KW-0472">Membrane</keyword>
<keyword id="KW-0813">Transport</keyword>
<reference key="1">
    <citation type="submission" date="2008-04" db="EMBL/GenBank/DDBJ databases">
        <title>Complete sequence of chromosome of Methylobacterium populi BJ001.</title>
        <authorList>
            <consortium name="US DOE Joint Genome Institute"/>
            <person name="Copeland A."/>
            <person name="Lucas S."/>
            <person name="Lapidus A."/>
            <person name="Glavina del Rio T."/>
            <person name="Dalin E."/>
            <person name="Tice H."/>
            <person name="Bruce D."/>
            <person name="Goodwin L."/>
            <person name="Pitluck S."/>
            <person name="Chertkov O."/>
            <person name="Brettin T."/>
            <person name="Detter J.C."/>
            <person name="Han C."/>
            <person name="Kuske C.R."/>
            <person name="Schmutz J."/>
            <person name="Larimer F."/>
            <person name="Land M."/>
            <person name="Hauser L."/>
            <person name="Kyrpides N."/>
            <person name="Mikhailova N."/>
            <person name="Marx C."/>
            <person name="Richardson P."/>
        </authorList>
    </citation>
    <scope>NUCLEOTIDE SEQUENCE [LARGE SCALE GENOMIC DNA]</scope>
    <source>
        <strain>ATCC BAA-705 / NCIMB 13946 / BJ001</strain>
    </source>
</reference>
<protein>
    <recommendedName>
        <fullName evidence="1">ATP synthase gamma chain</fullName>
    </recommendedName>
    <alternativeName>
        <fullName evidence="1">ATP synthase F1 sector gamma subunit</fullName>
    </alternativeName>
    <alternativeName>
        <fullName evidence="1">F-ATPase gamma subunit</fullName>
    </alternativeName>
</protein>
<sequence>MPSLKDLRNRITSVKATQKITKAMQMVAAAKLRRAQNAAENGRPYAEKMASVLANLAGNLIGGVGAPRLLSGTGQDRVHLLVVCTGDRGLAGAFNSSIARLARDHANRLMAEGKTVKIMTVGKKGLDVLRRQFRDQIIASRDIRGNKPVDYPFAAEIADDILARFEAGEFDVATLFYSEFRSVISQIPTAQKIIPAELPQTDGAAKGAGSDAAMEFEPSEETILETLLPKNLTVQVFRALLENAASEQGARMSAMDSATRNAGEMIKKQTLIYNRTRQAMITKELIEIISGAEAL</sequence>
<proteinExistence type="inferred from homology"/>
<accession>B1ZEE8</accession>
<feature type="chain" id="PRO_1000134177" description="ATP synthase gamma chain">
    <location>
        <begin position="1"/>
        <end position="295"/>
    </location>
</feature>
<gene>
    <name evidence="1" type="primary">atpG</name>
    <name type="ordered locus">Mpop_1466</name>
</gene>
<organism>
    <name type="scientific">Methylorubrum populi (strain ATCC BAA-705 / NCIMB 13946 / BJ001)</name>
    <name type="common">Methylobacterium populi</name>
    <dbReference type="NCBI Taxonomy" id="441620"/>
    <lineage>
        <taxon>Bacteria</taxon>
        <taxon>Pseudomonadati</taxon>
        <taxon>Pseudomonadota</taxon>
        <taxon>Alphaproteobacteria</taxon>
        <taxon>Hyphomicrobiales</taxon>
        <taxon>Methylobacteriaceae</taxon>
        <taxon>Methylorubrum</taxon>
    </lineage>
</organism>
<comment type="function">
    <text evidence="1">Produces ATP from ADP in the presence of a proton gradient across the membrane. The gamma chain is believed to be important in regulating ATPase activity and the flow of protons through the CF(0) complex.</text>
</comment>
<comment type="subunit">
    <text evidence="1">F-type ATPases have 2 components, CF(1) - the catalytic core - and CF(0) - the membrane proton channel. CF(1) has five subunits: alpha(3), beta(3), gamma(1), delta(1), epsilon(1). CF(0) has three main subunits: a, b and c.</text>
</comment>
<comment type="subcellular location">
    <subcellularLocation>
        <location evidence="1">Cell inner membrane</location>
        <topology evidence="1">Peripheral membrane protein</topology>
    </subcellularLocation>
</comment>
<comment type="similarity">
    <text evidence="1">Belongs to the ATPase gamma chain family.</text>
</comment>
<name>ATPG_METPB</name>
<evidence type="ECO:0000255" key="1">
    <source>
        <dbReference type="HAMAP-Rule" id="MF_00815"/>
    </source>
</evidence>